<proteinExistence type="inferred from homology"/>
<comment type="function">
    <text evidence="1">Transcriptional regulator.</text>
</comment>
<comment type="cofactor">
    <cofactor evidence="1">
        <name>Ni(2+)</name>
        <dbReference type="ChEBI" id="CHEBI:49786"/>
    </cofactor>
    <text evidence="1">Binds 1 nickel ion per subunit.</text>
</comment>
<comment type="similarity">
    <text evidence="1">Belongs to the transcriptional regulatory CopG/NikR family.</text>
</comment>
<feature type="chain" id="PRO_1000125836" description="Putative nickel-responsive regulator">
    <location>
        <begin position="1"/>
        <end position="140"/>
    </location>
</feature>
<feature type="binding site" evidence="1">
    <location>
        <position position="76"/>
    </location>
    <ligand>
        <name>Ni(2+)</name>
        <dbReference type="ChEBI" id="CHEBI:49786"/>
    </ligand>
</feature>
<feature type="binding site" evidence="1">
    <location>
        <position position="87"/>
    </location>
    <ligand>
        <name>Ni(2+)</name>
        <dbReference type="ChEBI" id="CHEBI:49786"/>
    </ligand>
</feature>
<feature type="binding site" evidence="1">
    <location>
        <position position="89"/>
    </location>
    <ligand>
        <name>Ni(2+)</name>
        <dbReference type="ChEBI" id="CHEBI:49786"/>
    </ligand>
</feature>
<feature type="binding site" evidence="1">
    <location>
        <position position="95"/>
    </location>
    <ligand>
        <name>Ni(2+)</name>
        <dbReference type="ChEBI" id="CHEBI:49786"/>
    </ligand>
</feature>
<accession>Q137U7</accession>
<reference key="1">
    <citation type="submission" date="2006-03" db="EMBL/GenBank/DDBJ databases">
        <title>Complete sequence of Rhodopseudomonas palustris BisB5.</title>
        <authorList>
            <consortium name="US DOE Joint Genome Institute"/>
            <person name="Copeland A."/>
            <person name="Lucas S."/>
            <person name="Lapidus A."/>
            <person name="Barry K."/>
            <person name="Detter J.C."/>
            <person name="Glavina del Rio T."/>
            <person name="Hammon N."/>
            <person name="Israni S."/>
            <person name="Dalin E."/>
            <person name="Tice H."/>
            <person name="Pitluck S."/>
            <person name="Chain P."/>
            <person name="Malfatti S."/>
            <person name="Shin M."/>
            <person name="Vergez L."/>
            <person name="Schmutz J."/>
            <person name="Larimer F."/>
            <person name="Land M."/>
            <person name="Hauser L."/>
            <person name="Pelletier D.A."/>
            <person name="Kyrpides N."/>
            <person name="Lykidis A."/>
            <person name="Oda Y."/>
            <person name="Harwood C.S."/>
            <person name="Richardson P."/>
        </authorList>
    </citation>
    <scope>NUCLEOTIDE SEQUENCE [LARGE SCALE GENOMIC DNA]</scope>
    <source>
        <strain>BisB5</strain>
    </source>
</reference>
<gene>
    <name type="ordered locus">RPD_2412</name>
</gene>
<name>NIKR_RHOPS</name>
<dbReference type="EMBL" id="CP000283">
    <property type="protein sequence ID" value="ABE39642.1"/>
    <property type="molecule type" value="Genomic_DNA"/>
</dbReference>
<dbReference type="SMR" id="Q137U7"/>
<dbReference type="STRING" id="316057.RPD_2412"/>
<dbReference type="KEGG" id="rpd:RPD_2412"/>
<dbReference type="eggNOG" id="COG0864">
    <property type="taxonomic scope" value="Bacteria"/>
</dbReference>
<dbReference type="HOGENOM" id="CLU_113319_1_4_5"/>
<dbReference type="BioCyc" id="RPAL316057:RPD_RS12095-MONOMER"/>
<dbReference type="Proteomes" id="UP000001818">
    <property type="component" value="Chromosome"/>
</dbReference>
<dbReference type="GO" id="GO:0003677">
    <property type="term" value="F:DNA binding"/>
    <property type="evidence" value="ECO:0007669"/>
    <property type="project" value="UniProtKB-KW"/>
</dbReference>
<dbReference type="GO" id="GO:0003700">
    <property type="term" value="F:DNA-binding transcription factor activity"/>
    <property type="evidence" value="ECO:0007669"/>
    <property type="project" value="UniProtKB-UniRule"/>
</dbReference>
<dbReference type="GO" id="GO:0016151">
    <property type="term" value="F:nickel cation binding"/>
    <property type="evidence" value="ECO:0007669"/>
    <property type="project" value="UniProtKB-UniRule"/>
</dbReference>
<dbReference type="GO" id="GO:0010045">
    <property type="term" value="P:response to nickel cation"/>
    <property type="evidence" value="ECO:0007669"/>
    <property type="project" value="InterPro"/>
</dbReference>
<dbReference type="CDD" id="cd22231">
    <property type="entry name" value="RHH_NikR_HicB-like"/>
    <property type="match status" value="1"/>
</dbReference>
<dbReference type="Gene3D" id="3.30.70.1150">
    <property type="entry name" value="ACT-like. Chain A, domain 2"/>
    <property type="match status" value="1"/>
</dbReference>
<dbReference type="Gene3D" id="1.10.1220.10">
    <property type="entry name" value="Met repressor-like"/>
    <property type="match status" value="1"/>
</dbReference>
<dbReference type="HAMAP" id="MF_00476">
    <property type="entry name" value="NikR"/>
    <property type="match status" value="1"/>
</dbReference>
<dbReference type="InterPro" id="IPR027271">
    <property type="entry name" value="Acetolactate_synth/TF_NikR_C"/>
</dbReference>
<dbReference type="InterPro" id="IPR045865">
    <property type="entry name" value="ACT-like_dom_sf"/>
</dbReference>
<dbReference type="InterPro" id="IPR013321">
    <property type="entry name" value="Arc_rbn_hlx_hlx"/>
</dbReference>
<dbReference type="InterPro" id="IPR002145">
    <property type="entry name" value="CopG"/>
</dbReference>
<dbReference type="InterPro" id="IPR050192">
    <property type="entry name" value="CopG/NikR_regulator"/>
</dbReference>
<dbReference type="InterPro" id="IPR022988">
    <property type="entry name" value="Ni_resp_reg_NikR"/>
</dbReference>
<dbReference type="InterPro" id="IPR014160">
    <property type="entry name" value="Nickel_NikR_proteobac"/>
</dbReference>
<dbReference type="InterPro" id="IPR010985">
    <property type="entry name" value="Ribbon_hlx_hlx"/>
</dbReference>
<dbReference type="InterPro" id="IPR014864">
    <property type="entry name" value="TF_NikR_Ni-bd_C"/>
</dbReference>
<dbReference type="NCBIfam" id="TIGR02793">
    <property type="entry name" value="nikR"/>
    <property type="match status" value="1"/>
</dbReference>
<dbReference type="NCBIfam" id="NF002815">
    <property type="entry name" value="PRK02967.1"/>
    <property type="match status" value="1"/>
</dbReference>
<dbReference type="NCBIfam" id="NF003381">
    <property type="entry name" value="PRK04460.1"/>
    <property type="match status" value="1"/>
</dbReference>
<dbReference type="PANTHER" id="PTHR34719">
    <property type="entry name" value="NICKEL-RESPONSIVE REGULATOR"/>
    <property type="match status" value="1"/>
</dbReference>
<dbReference type="PANTHER" id="PTHR34719:SF2">
    <property type="entry name" value="NICKEL-RESPONSIVE REGULATOR"/>
    <property type="match status" value="1"/>
</dbReference>
<dbReference type="Pfam" id="PF08753">
    <property type="entry name" value="NikR_C"/>
    <property type="match status" value="1"/>
</dbReference>
<dbReference type="Pfam" id="PF01402">
    <property type="entry name" value="RHH_1"/>
    <property type="match status" value="1"/>
</dbReference>
<dbReference type="SUPFAM" id="SSF55021">
    <property type="entry name" value="ACT-like"/>
    <property type="match status" value="1"/>
</dbReference>
<dbReference type="SUPFAM" id="SSF47598">
    <property type="entry name" value="Ribbon-helix-helix"/>
    <property type="match status" value="1"/>
</dbReference>
<organism>
    <name type="scientific">Rhodopseudomonas palustris (strain BisB5)</name>
    <dbReference type="NCBI Taxonomy" id="316057"/>
    <lineage>
        <taxon>Bacteria</taxon>
        <taxon>Pseudomonadati</taxon>
        <taxon>Pseudomonadota</taxon>
        <taxon>Alphaproteobacteria</taxon>
        <taxon>Hyphomicrobiales</taxon>
        <taxon>Nitrobacteraceae</taxon>
        <taxon>Rhodopseudomonas</taxon>
    </lineage>
</organism>
<evidence type="ECO:0000255" key="1">
    <source>
        <dbReference type="HAMAP-Rule" id="MF_00476"/>
    </source>
</evidence>
<protein>
    <recommendedName>
        <fullName evidence="1">Putative nickel-responsive regulator</fullName>
    </recommendedName>
</protein>
<keyword id="KW-0238">DNA-binding</keyword>
<keyword id="KW-0479">Metal-binding</keyword>
<keyword id="KW-0533">Nickel</keyword>
<keyword id="KW-0804">Transcription</keyword>
<keyword id="KW-0805">Transcription regulation</keyword>
<sequence>MHRVTITLDDDLMERLDAIIAVRGYQNRSEAIRDLARIGIQQTSAHDSGERCVGAMVYTYDHSKRDLPRKLTQSFHNHHDLSRATMHVHLDHDQCLEVTILDGKASELQHFADHIFSERGVRYGRLVTIPTMDDEQHTHD</sequence>